<keyword id="KW-0227">DNA damage</keyword>
<keyword id="KW-0234">DNA repair</keyword>
<keyword id="KW-0235">DNA replication</keyword>
<keyword id="KW-0436">Ligase</keyword>
<keyword id="KW-0460">Magnesium</keyword>
<keyword id="KW-0464">Manganese</keyword>
<keyword id="KW-0479">Metal-binding</keyword>
<keyword id="KW-0520">NAD</keyword>
<keyword id="KW-1185">Reference proteome</keyword>
<keyword id="KW-0862">Zinc</keyword>
<name>DNLJ_POLAQ</name>
<evidence type="ECO:0000255" key="1">
    <source>
        <dbReference type="HAMAP-Rule" id="MF_01588"/>
    </source>
</evidence>
<dbReference type="EC" id="6.5.1.2" evidence="1"/>
<dbReference type="EMBL" id="CP000655">
    <property type="protein sequence ID" value="ABP34669.1"/>
    <property type="molecule type" value="Genomic_DNA"/>
</dbReference>
<dbReference type="RefSeq" id="WP_011903292.1">
    <property type="nucleotide sequence ID" value="NC_009379.1"/>
</dbReference>
<dbReference type="SMR" id="A4SYV5"/>
<dbReference type="GeneID" id="31481845"/>
<dbReference type="KEGG" id="pnu:Pnuc_1455"/>
<dbReference type="eggNOG" id="COG0272">
    <property type="taxonomic scope" value="Bacteria"/>
</dbReference>
<dbReference type="HOGENOM" id="CLU_007764_2_1_4"/>
<dbReference type="Proteomes" id="UP000000231">
    <property type="component" value="Chromosome"/>
</dbReference>
<dbReference type="GO" id="GO:0005829">
    <property type="term" value="C:cytosol"/>
    <property type="evidence" value="ECO:0007669"/>
    <property type="project" value="TreeGrafter"/>
</dbReference>
<dbReference type="GO" id="GO:0003677">
    <property type="term" value="F:DNA binding"/>
    <property type="evidence" value="ECO:0007669"/>
    <property type="project" value="InterPro"/>
</dbReference>
<dbReference type="GO" id="GO:0003911">
    <property type="term" value="F:DNA ligase (NAD+) activity"/>
    <property type="evidence" value="ECO:0007669"/>
    <property type="project" value="UniProtKB-UniRule"/>
</dbReference>
<dbReference type="GO" id="GO:0046872">
    <property type="term" value="F:metal ion binding"/>
    <property type="evidence" value="ECO:0007669"/>
    <property type="project" value="UniProtKB-KW"/>
</dbReference>
<dbReference type="GO" id="GO:0006281">
    <property type="term" value="P:DNA repair"/>
    <property type="evidence" value="ECO:0007669"/>
    <property type="project" value="UniProtKB-KW"/>
</dbReference>
<dbReference type="GO" id="GO:0006260">
    <property type="term" value="P:DNA replication"/>
    <property type="evidence" value="ECO:0007669"/>
    <property type="project" value="UniProtKB-KW"/>
</dbReference>
<dbReference type="CDD" id="cd17748">
    <property type="entry name" value="BRCT_DNA_ligase_like"/>
    <property type="match status" value="1"/>
</dbReference>
<dbReference type="CDD" id="cd00114">
    <property type="entry name" value="LIGANc"/>
    <property type="match status" value="1"/>
</dbReference>
<dbReference type="FunFam" id="1.10.150.20:FF:000006">
    <property type="entry name" value="DNA ligase"/>
    <property type="match status" value="1"/>
</dbReference>
<dbReference type="FunFam" id="1.10.150.20:FF:000007">
    <property type="entry name" value="DNA ligase"/>
    <property type="match status" value="1"/>
</dbReference>
<dbReference type="FunFam" id="2.40.50.140:FF:000012">
    <property type="entry name" value="DNA ligase"/>
    <property type="match status" value="1"/>
</dbReference>
<dbReference type="FunFam" id="3.30.470.30:FF:000001">
    <property type="entry name" value="DNA ligase"/>
    <property type="match status" value="1"/>
</dbReference>
<dbReference type="Gene3D" id="6.20.10.30">
    <property type="match status" value="1"/>
</dbReference>
<dbReference type="Gene3D" id="1.10.150.20">
    <property type="entry name" value="5' to 3' exonuclease, C-terminal subdomain"/>
    <property type="match status" value="2"/>
</dbReference>
<dbReference type="Gene3D" id="3.40.50.10190">
    <property type="entry name" value="BRCT domain"/>
    <property type="match status" value="1"/>
</dbReference>
<dbReference type="Gene3D" id="3.30.470.30">
    <property type="entry name" value="DNA ligase/mRNA capping enzyme"/>
    <property type="match status" value="1"/>
</dbReference>
<dbReference type="Gene3D" id="1.10.287.610">
    <property type="entry name" value="Helix hairpin bin"/>
    <property type="match status" value="1"/>
</dbReference>
<dbReference type="Gene3D" id="2.40.50.140">
    <property type="entry name" value="Nucleic acid-binding proteins"/>
    <property type="match status" value="1"/>
</dbReference>
<dbReference type="HAMAP" id="MF_01588">
    <property type="entry name" value="DNA_ligase_A"/>
    <property type="match status" value="1"/>
</dbReference>
<dbReference type="InterPro" id="IPR001357">
    <property type="entry name" value="BRCT_dom"/>
</dbReference>
<dbReference type="InterPro" id="IPR036420">
    <property type="entry name" value="BRCT_dom_sf"/>
</dbReference>
<dbReference type="InterPro" id="IPR041663">
    <property type="entry name" value="DisA/LigA_HHH"/>
</dbReference>
<dbReference type="InterPro" id="IPR001679">
    <property type="entry name" value="DNA_ligase"/>
</dbReference>
<dbReference type="InterPro" id="IPR018239">
    <property type="entry name" value="DNA_ligase_AS"/>
</dbReference>
<dbReference type="InterPro" id="IPR033136">
    <property type="entry name" value="DNA_ligase_CS"/>
</dbReference>
<dbReference type="InterPro" id="IPR013839">
    <property type="entry name" value="DNAligase_adenylation"/>
</dbReference>
<dbReference type="InterPro" id="IPR013840">
    <property type="entry name" value="DNAligase_N"/>
</dbReference>
<dbReference type="InterPro" id="IPR003583">
    <property type="entry name" value="Hlx-hairpin-Hlx_DNA-bd_motif"/>
</dbReference>
<dbReference type="InterPro" id="IPR012340">
    <property type="entry name" value="NA-bd_OB-fold"/>
</dbReference>
<dbReference type="InterPro" id="IPR004150">
    <property type="entry name" value="NAD_DNA_ligase_OB"/>
</dbReference>
<dbReference type="InterPro" id="IPR010994">
    <property type="entry name" value="RuvA_2-like"/>
</dbReference>
<dbReference type="InterPro" id="IPR004149">
    <property type="entry name" value="Znf_DNAligase_C4"/>
</dbReference>
<dbReference type="NCBIfam" id="TIGR00575">
    <property type="entry name" value="dnlj"/>
    <property type="match status" value="1"/>
</dbReference>
<dbReference type="NCBIfam" id="NF005932">
    <property type="entry name" value="PRK07956.1"/>
    <property type="match status" value="1"/>
</dbReference>
<dbReference type="PANTHER" id="PTHR23389">
    <property type="entry name" value="CHROMOSOME TRANSMISSION FIDELITY FACTOR 18"/>
    <property type="match status" value="1"/>
</dbReference>
<dbReference type="PANTHER" id="PTHR23389:SF9">
    <property type="entry name" value="DNA LIGASE"/>
    <property type="match status" value="1"/>
</dbReference>
<dbReference type="Pfam" id="PF00533">
    <property type="entry name" value="BRCT"/>
    <property type="match status" value="1"/>
</dbReference>
<dbReference type="Pfam" id="PF01653">
    <property type="entry name" value="DNA_ligase_aden"/>
    <property type="match status" value="1"/>
</dbReference>
<dbReference type="Pfam" id="PF03120">
    <property type="entry name" value="DNA_ligase_OB"/>
    <property type="match status" value="1"/>
</dbReference>
<dbReference type="Pfam" id="PF03119">
    <property type="entry name" value="DNA_ligase_ZBD"/>
    <property type="match status" value="1"/>
</dbReference>
<dbReference type="Pfam" id="PF12826">
    <property type="entry name" value="HHH_2"/>
    <property type="match status" value="1"/>
</dbReference>
<dbReference type="Pfam" id="PF14520">
    <property type="entry name" value="HHH_5"/>
    <property type="match status" value="1"/>
</dbReference>
<dbReference type="PIRSF" id="PIRSF001604">
    <property type="entry name" value="LigA"/>
    <property type="match status" value="1"/>
</dbReference>
<dbReference type="SMART" id="SM00292">
    <property type="entry name" value="BRCT"/>
    <property type="match status" value="1"/>
</dbReference>
<dbReference type="SMART" id="SM00278">
    <property type="entry name" value="HhH1"/>
    <property type="match status" value="4"/>
</dbReference>
<dbReference type="SMART" id="SM00532">
    <property type="entry name" value="LIGANc"/>
    <property type="match status" value="1"/>
</dbReference>
<dbReference type="SUPFAM" id="SSF52113">
    <property type="entry name" value="BRCT domain"/>
    <property type="match status" value="1"/>
</dbReference>
<dbReference type="SUPFAM" id="SSF56091">
    <property type="entry name" value="DNA ligase/mRNA capping enzyme, catalytic domain"/>
    <property type="match status" value="1"/>
</dbReference>
<dbReference type="SUPFAM" id="SSF50249">
    <property type="entry name" value="Nucleic acid-binding proteins"/>
    <property type="match status" value="1"/>
</dbReference>
<dbReference type="SUPFAM" id="SSF47781">
    <property type="entry name" value="RuvA domain 2-like"/>
    <property type="match status" value="1"/>
</dbReference>
<dbReference type="PROSITE" id="PS50172">
    <property type="entry name" value="BRCT"/>
    <property type="match status" value="1"/>
</dbReference>
<dbReference type="PROSITE" id="PS01055">
    <property type="entry name" value="DNA_LIGASE_N1"/>
    <property type="match status" value="1"/>
</dbReference>
<dbReference type="PROSITE" id="PS01056">
    <property type="entry name" value="DNA_LIGASE_N2"/>
    <property type="match status" value="1"/>
</dbReference>
<protein>
    <recommendedName>
        <fullName evidence="1">DNA ligase</fullName>
        <ecNumber evidence="1">6.5.1.2</ecNumber>
    </recommendedName>
    <alternativeName>
        <fullName evidence="1">Polydeoxyribonucleotide synthase [NAD(+)]</fullName>
    </alternativeName>
</protein>
<feature type="chain" id="PRO_0000340365" description="DNA ligase">
    <location>
        <begin position="1"/>
        <end position="671"/>
    </location>
</feature>
<feature type="domain" description="BRCT" evidence="1">
    <location>
        <begin position="594"/>
        <end position="671"/>
    </location>
</feature>
<feature type="active site" description="N6-AMP-lysine intermediate" evidence="1">
    <location>
        <position position="119"/>
    </location>
</feature>
<feature type="binding site" evidence="1">
    <location>
        <begin position="37"/>
        <end position="41"/>
    </location>
    <ligand>
        <name>NAD(+)</name>
        <dbReference type="ChEBI" id="CHEBI:57540"/>
    </ligand>
</feature>
<feature type="binding site" evidence="1">
    <location>
        <begin position="86"/>
        <end position="87"/>
    </location>
    <ligand>
        <name>NAD(+)</name>
        <dbReference type="ChEBI" id="CHEBI:57540"/>
    </ligand>
</feature>
<feature type="binding site" evidence="1">
    <location>
        <position position="117"/>
    </location>
    <ligand>
        <name>NAD(+)</name>
        <dbReference type="ChEBI" id="CHEBI:57540"/>
    </ligand>
</feature>
<feature type="binding site" evidence="1">
    <location>
        <position position="140"/>
    </location>
    <ligand>
        <name>NAD(+)</name>
        <dbReference type="ChEBI" id="CHEBI:57540"/>
    </ligand>
</feature>
<feature type="binding site" evidence="1">
    <location>
        <position position="177"/>
    </location>
    <ligand>
        <name>NAD(+)</name>
        <dbReference type="ChEBI" id="CHEBI:57540"/>
    </ligand>
</feature>
<feature type="binding site" evidence="1">
    <location>
        <position position="295"/>
    </location>
    <ligand>
        <name>NAD(+)</name>
        <dbReference type="ChEBI" id="CHEBI:57540"/>
    </ligand>
</feature>
<feature type="binding site" evidence="1">
    <location>
        <position position="319"/>
    </location>
    <ligand>
        <name>NAD(+)</name>
        <dbReference type="ChEBI" id="CHEBI:57540"/>
    </ligand>
</feature>
<feature type="binding site" evidence="1">
    <location>
        <position position="413"/>
    </location>
    <ligand>
        <name>Zn(2+)</name>
        <dbReference type="ChEBI" id="CHEBI:29105"/>
    </ligand>
</feature>
<feature type="binding site" evidence="1">
    <location>
        <position position="416"/>
    </location>
    <ligand>
        <name>Zn(2+)</name>
        <dbReference type="ChEBI" id="CHEBI:29105"/>
    </ligand>
</feature>
<feature type="binding site" evidence="1">
    <location>
        <position position="431"/>
    </location>
    <ligand>
        <name>Zn(2+)</name>
        <dbReference type="ChEBI" id="CHEBI:29105"/>
    </ligand>
</feature>
<feature type="binding site" evidence="1">
    <location>
        <position position="437"/>
    </location>
    <ligand>
        <name>Zn(2+)</name>
        <dbReference type="ChEBI" id="CHEBI:29105"/>
    </ligand>
</feature>
<proteinExistence type="inferred from homology"/>
<reference key="1">
    <citation type="journal article" date="2012" name="Stand. Genomic Sci.">
        <title>Complete genome sequence of Polynucleobacter necessarius subsp. asymbioticus type strain (QLW-P1DMWA-1(T)).</title>
        <authorList>
            <person name="Meincke L."/>
            <person name="Copeland A."/>
            <person name="Lapidus A."/>
            <person name="Lucas S."/>
            <person name="Berry K.W."/>
            <person name="Del Rio T.G."/>
            <person name="Hammon N."/>
            <person name="Dalin E."/>
            <person name="Tice H."/>
            <person name="Pitluck S."/>
            <person name="Richardson P."/>
            <person name="Bruce D."/>
            <person name="Goodwin L."/>
            <person name="Han C."/>
            <person name="Tapia R."/>
            <person name="Detter J.C."/>
            <person name="Schmutz J."/>
            <person name="Brettin T."/>
            <person name="Larimer F."/>
            <person name="Land M."/>
            <person name="Hauser L."/>
            <person name="Kyrpides N.C."/>
            <person name="Ivanova N."/>
            <person name="Goker M."/>
            <person name="Woyke T."/>
            <person name="Wu Q.L."/>
            <person name="Pockl M."/>
            <person name="Hahn M.W."/>
            <person name="Klenk H.P."/>
        </authorList>
    </citation>
    <scope>NUCLEOTIDE SEQUENCE [LARGE SCALE GENOMIC DNA]</scope>
    <source>
        <strain>DSM 18221 / CIP 109841 / QLW-P1DMWA-1</strain>
    </source>
</reference>
<organism>
    <name type="scientific">Polynucleobacter asymbioticus (strain DSM 18221 / CIP 109841 / QLW-P1DMWA-1)</name>
    <name type="common">Polynucleobacter necessarius subsp. asymbioticus</name>
    <dbReference type="NCBI Taxonomy" id="312153"/>
    <lineage>
        <taxon>Bacteria</taxon>
        <taxon>Pseudomonadati</taxon>
        <taxon>Pseudomonadota</taxon>
        <taxon>Betaproteobacteria</taxon>
        <taxon>Burkholderiales</taxon>
        <taxon>Burkholderiaceae</taxon>
        <taxon>Polynucleobacter</taxon>
    </lineage>
</organism>
<gene>
    <name evidence="1" type="primary">ligA</name>
    <name type="ordered locus">Pnuc_1455</name>
</gene>
<accession>A4SYV5</accession>
<sequence length="671" mass="73743">MSSNSPTNLADRYAFLQAELARLEHAYYVLDNPLLPDIEYDRLYRELLDIEAAHPQWVTSESLSQRVGGTALKEFDSVTHAVPMLSLNNAFEDSELIAFDRRCREALHVEHVAYAGELKFDGLAISLRYENGTLVTAATRGDGASGEDVTANIKTIRAIPLKLTGKNIPEILEVRGEVFMYLKDFEKMNRQAAELGEKEFANPRNAAAGSLRQLDSKITAKRPLSFFAYGLGALEPQSWLPKTHEELLNAYVELGLPVCSERRVLHSVEEILAFYNEIGAKRDSLPYDIDGVVYKVNSFAEQAKLGFVSRAPRFALAHKYPAQEALTTVLGIDVQVGRTGAITPVARLAPVEVGGVTVTNATLHNEDEVKRKDVRIGDTVSVRRAGDVIPEVVSVIKERRPSDAKEFVMPSRCPVCDSHIERLADEAVARCSGGLFCGAQRKQALIHFAHRRALDIEGLGEKIVDQLVDQNLVRTPADLYRLGFTALANLERMGEKSADNLIQAINQSRNTTLARFIFALGIRHVGETTAKDLANHYQSMHALMDASVEELLTVKDVGPVVADSITSFMQEAHNREVIEQLLASGMQLSVEEKIISAAVFGKTFVLTGTFPTMTRDEAKDLLEKAGAKVAGSVSKKTDYVVAGTDAGSKLAKAEELGVPVIDEEEMLNLLK</sequence>
<comment type="function">
    <text evidence="1">DNA ligase that catalyzes the formation of phosphodiester linkages between 5'-phosphoryl and 3'-hydroxyl groups in double-stranded DNA using NAD as a coenzyme and as the energy source for the reaction. It is essential for DNA replication and repair of damaged DNA.</text>
</comment>
<comment type="catalytic activity">
    <reaction evidence="1">
        <text>NAD(+) + (deoxyribonucleotide)n-3'-hydroxyl + 5'-phospho-(deoxyribonucleotide)m = (deoxyribonucleotide)n+m + AMP + beta-nicotinamide D-nucleotide.</text>
        <dbReference type="EC" id="6.5.1.2"/>
    </reaction>
</comment>
<comment type="cofactor">
    <cofactor evidence="1">
        <name>Mg(2+)</name>
        <dbReference type="ChEBI" id="CHEBI:18420"/>
    </cofactor>
    <cofactor evidence="1">
        <name>Mn(2+)</name>
        <dbReference type="ChEBI" id="CHEBI:29035"/>
    </cofactor>
</comment>
<comment type="similarity">
    <text evidence="1">Belongs to the NAD-dependent DNA ligase family. LigA subfamily.</text>
</comment>